<evidence type="ECO:0000250" key="1"/>
<evidence type="ECO:0000250" key="2">
    <source>
        <dbReference type="UniProtKB" id="P70345"/>
    </source>
</evidence>
<evidence type="ECO:0000250" key="3">
    <source>
        <dbReference type="UniProtKB" id="Q92843"/>
    </source>
</evidence>
<evidence type="ECO:0000305" key="4"/>
<accession>Q45T69</accession>
<keyword id="KW-0007">Acetylation</keyword>
<keyword id="KW-0053">Apoptosis</keyword>
<keyword id="KW-0472">Membrane</keyword>
<keyword id="KW-0496">Mitochondrion</keyword>
<keyword id="KW-1185">Reference proteome</keyword>
<organism>
    <name type="scientific">Canis lupus familiaris</name>
    <name type="common">Dog</name>
    <name type="synonym">Canis familiaris</name>
    <dbReference type="NCBI Taxonomy" id="9615"/>
    <lineage>
        <taxon>Eukaryota</taxon>
        <taxon>Metazoa</taxon>
        <taxon>Chordata</taxon>
        <taxon>Craniata</taxon>
        <taxon>Vertebrata</taxon>
        <taxon>Euteleostomi</taxon>
        <taxon>Mammalia</taxon>
        <taxon>Eutheria</taxon>
        <taxon>Laurasiatheria</taxon>
        <taxon>Carnivora</taxon>
        <taxon>Caniformia</taxon>
        <taxon>Canidae</taxon>
        <taxon>Canis</taxon>
    </lineage>
</organism>
<gene>
    <name type="primary">BCL2L2</name>
</gene>
<sequence length="193" mass="20774">MATPASAPDTRALVADFVGYKLRQKGYVCGAGPGEGPAADPLHQAMRAAGDEFETRFRRTFSDLAAQLHVTPGSAQQRFTQVSDELFQGGPNWGRLVAFFVFGAALCAESVNKEMEPLVGQVQEWMVAYLETRLADWIHSSGGWAEFTALYGDGALEEARRLREGNWASVRTVLTGAVALGALVTVGAFFASK</sequence>
<protein>
    <recommendedName>
        <fullName>Bcl-2-like protein 2</fullName>
        <shortName>Bcl2-L-2</shortName>
    </recommendedName>
    <alternativeName>
        <fullName>Apoptosis regulator Bcl-W</fullName>
    </alternativeName>
</protein>
<name>B2CL2_CANLF</name>
<reference key="1">
    <citation type="submission" date="2005-07" db="EMBL/GenBank/DDBJ databases">
        <authorList>
            <person name="Rickenbacher A.B."/>
            <person name="Schade B."/>
            <person name="Keller S.M."/>
            <person name="Guscetti F."/>
        </authorList>
    </citation>
    <scope>NUCLEOTIDE SEQUENCE [MRNA]</scope>
    <source>
        <strain>Beagle</strain>
        <tissue>Kidney</tissue>
    </source>
</reference>
<comment type="function">
    <text evidence="1">Promotes cell survival. Blocks dexamethasone-induced apoptosis. Mediates survival of postmitotic Sertoli cells by suppressing death-promoting activity of BAX (By similarity).</text>
</comment>
<comment type="subunit">
    <text evidence="2">Interacts with HIF3A (via C-terminus domain). Interacts with BOP.</text>
</comment>
<comment type="subcellular location">
    <subcellularLocation>
        <location evidence="1">Mitochondrion membrane</location>
        <topology evidence="1">Peripheral membrane protein</topology>
    </subcellularLocation>
    <text evidence="1">Loosely associated with the mitochondrial membrane in healthy cells. During apoptosis, tightly bound to the membrane (By similarity).</text>
</comment>
<comment type="domain">
    <text evidence="1">The BH4 motif seems to be involved in the anti-apoptotic function.</text>
</comment>
<comment type="domain">
    <text evidence="1">The BH1 and BH2 motifs form a hydrophobic groove which acts as a docking site for the BH3 domain of some pro-apoptotic proteins. The C-terminal residues of BCL2L2 fold into the BH3-binding cleft and modulate pro-survival activity by regulating ligand access. When BH3 domain-containing proteins bind, they displace the C-terminus, allowing its insertion into the membrane and neutralizing the pro-survival activity of BCL2L2 (By similarity).</text>
</comment>
<comment type="similarity">
    <text evidence="4">Belongs to the Bcl-2 family.</text>
</comment>
<feature type="initiator methionine" description="Removed" evidence="3">
    <location>
        <position position="1"/>
    </location>
</feature>
<feature type="chain" id="PRO_0000247325" description="Bcl-2-like protein 2">
    <location>
        <begin position="2"/>
        <end position="193"/>
    </location>
</feature>
<feature type="short sequence motif" description="BH4">
    <location>
        <begin position="9"/>
        <end position="29"/>
    </location>
</feature>
<feature type="short sequence motif" description="BH1">
    <location>
        <begin position="85"/>
        <end position="104"/>
    </location>
</feature>
<feature type="short sequence motif" description="BH2">
    <location>
        <begin position="136"/>
        <end position="151"/>
    </location>
</feature>
<feature type="modified residue" description="N-acetylalanine" evidence="3">
    <location>
        <position position="2"/>
    </location>
</feature>
<proteinExistence type="evidence at transcript level"/>
<dbReference type="EMBL" id="DQ116955">
    <property type="protein sequence ID" value="AAZ22484.1"/>
    <property type="molecule type" value="mRNA"/>
</dbReference>
<dbReference type="RefSeq" id="NP_001026805.1">
    <property type="nucleotide sequence ID" value="NM_001031635.2"/>
</dbReference>
<dbReference type="RefSeq" id="XP_005623259.1">
    <property type="nucleotide sequence ID" value="XM_005623202.2"/>
</dbReference>
<dbReference type="SMR" id="Q45T69"/>
<dbReference type="FunCoup" id="Q45T69">
    <property type="interactions" value="178"/>
</dbReference>
<dbReference type="STRING" id="9615.ENSCAFP00000060806"/>
<dbReference type="PaxDb" id="9612-ENSCAFP00000016862"/>
<dbReference type="Ensembl" id="ENSCAFT00000018210.4">
    <property type="protein sequence ID" value="ENSCAFP00000016862.3"/>
    <property type="gene ID" value="ENSCAFG00000011482.6"/>
</dbReference>
<dbReference type="Ensembl" id="ENSCAFT00030028970.1">
    <property type="protein sequence ID" value="ENSCAFP00030025256.1"/>
    <property type="gene ID" value="ENSCAFG00030015644.1"/>
</dbReference>
<dbReference type="Ensembl" id="ENSCAFT00040004280.1">
    <property type="protein sequence ID" value="ENSCAFP00040003678.1"/>
    <property type="gene ID" value="ENSCAFG00040002254.1"/>
</dbReference>
<dbReference type="Ensembl" id="ENSCAFT00845005930.1">
    <property type="protein sequence ID" value="ENSCAFP00845004717.1"/>
    <property type="gene ID" value="ENSCAFG00845003335.1"/>
</dbReference>
<dbReference type="GeneID" id="490611"/>
<dbReference type="KEGG" id="cfa:490611"/>
<dbReference type="CTD" id="599"/>
<dbReference type="VEuPathDB" id="HostDB:ENSCAFG00845003335"/>
<dbReference type="VGNC" id="VGNC:50550">
    <property type="gene designation" value="PABPN1"/>
</dbReference>
<dbReference type="eggNOG" id="KOG4728">
    <property type="taxonomic scope" value="Eukaryota"/>
</dbReference>
<dbReference type="GeneTree" id="ENSGT00940000154606"/>
<dbReference type="HOGENOM" id="CLU_085401_0_2_1"/>
<dbReference type="InParanoid" id="Q45T69"/>
<dbReference type="OMA" id="WMVVYLE"/>
<dbReference type="OrthoDB" id="19675at33554"/>
<dbReference type="TreeFam" id="TF315834"/>
<dbReference type="Proteomes" id="UP000002254">
    <property type="component" value="Chromosome 8"/>
</dbReference>
<dbReference type="Proteomes" id="UP000694429">
    <property type="component" value="Chromosome 8"/>
</dbReference>
<dbReference type="Proteomes" id="UP000694542">
    <property type="component" value="Chromosome 8"/>
</dbReference>
<dbReference type="Proteomes" id="UP000805418">
    <property type="component" value="Chromosome 8"/>
</dbReference>
<dbReference type="Bgee" id="ENSCAFG00000011482">
    <property type="expression patterns" value="Expressed in testis and 47 other cell types or tissues"/>
</dbReference>
<dbReference type="GO" id="GO:0005741">
    <property type="term" value="C:mitochondrial outer membrane"/>
    <property type="evidence" value="ECO:0000318"/>
    <property type="project" value="GO_Central"/>
</dbReference>
<dbReference type="GO" id="GO:0016607">
    <property type="term" value="C:nuclear speck"/>
    <property type="evidence" value="ECO:0000250"/>
    <property type="project" value="UniProtKB"/>
</dbReference>
<dbReference type="GO" id="GO:0005634">
    <property type="term" value="C:nucleus"/>
    <property type="evidence" value="ECO:0000250"/>
    <property type="project" value="UniProtKB"/>
</dbReference>
<dbReference type="GO" id="GO:0015267">
    <property type="term" value="F:channel activity"/>
    <property type="evidence" value="ECO:0000318"/>
    <property type="project" value="GO_Central"/>
</dbReference>
<dbReference type="GO" id="GO:0097192">
    <property type="term" value="P:extrinsic apoptotic signaling pathway in absence of ligand"/>
    <property type="evidence" value="ECO:0000318"/>
    <property type="project" value="GO_Central"/>
</dbReference>
<dbReference type="GO" id="GO:0008630">
    <property type="term" value="P:intrinsic apoptotic signaling pathway in response to DNA damage"/>
    <property type="evidence" value="ECO:0000318"/>
    <property type="project" value="GO_Central"/>
</dbReference>
<dbReference type="GO" id="GO:0043065">
    <property type="term" value="P:positive regulation of apoptotic process"/>
    <property type="evidence" value="ECO:0000318"/>
    <property type="project" value="GO_Central"/>
</dbReference>
<dbReference type="GO" id="GO:0001836">
    <property type="term" value="P:release of cytochrome c from mitochondria"/>
    <property type="evidence" value="ECO:0000318"/>
    <property type="project" value="GO_Central"/>
</dbReference>
<dbReference type="CDD" id="cd06845">
    <property type="entry name" value="Bcl-2_like"/>
    <property type="match status" value="1"/>
</dbReference>
<dbReference type="FunFam" id="1.10.437.10:FF:000001">
    <property type="entry name" value="Bcl-2-like protein 2"/>
    <property type="match status" value="1"/>
</dbReference>
<dbReference type="Gene3D" id="1.10.437.10">
    <property type="entry name" value="Blc2-like"/>
    <property type="match status" value="1"/>
</dbReference>
<dbReference type="InterPro" id="IPR013280">
    <property type="entry name" value="Apop_reg_BclW"/>
</dbReference>
<dbReference type="InterPro" id="IPR036834">
    <property type="entry name" value="Bcl-2-like_sf"/>
</dbReference>
<dbReference type="InterPro" id="IPR046371">
    <property type="entry name" value="Bcl-2_BH1-3"/>
</dbReference>
<dbReference type="InterPro" id="IPR026298">
    <property type="entry name" value="Bcl-2_fam"/>
</dbReference>
<dbReference type="InterPro" id="IPR002475">
    <property type="entry name" value="Bcl2-like"/>
</dbReference>
<dbReference type="InterPro" id="IPR020717">
    <property type="entry name" value="Bcl2_BH1_motif_CS"/>
</dbReference>
<dbReference type="InterPro" id="IPR020726">
    <property type="entry name" value="Bcl2_BH2_motif_CS"/>
</dbReference>
<dbReference type="InterPro" id="IPR003093">
    <property type="entry name" value="Bcl2_BH4"/>
</dbReference>
<dbReference type="InterPro" id="IPR020731">
    <property type="entry name" value="Bcl2_BH4_motif_CS"/>
</dbReference>
<dbReference type="PANTHER" id="PTHR11256">
    <property type="entry name" value="BCL-2 RELATED"/>
    <property type="match status" value="1"/>
</dbReference>
<dbReference type="PANTHER" id="PTHR11256:SF13">
    <property type="entry name" value="BCL-2-LIKE PROTEIN 2"/>
    <property type="match status" value="1"/>
</dbReference>
<dbReference type="Pfam" id="PF00452">
    <property type="entry name" value="Bcl-2"/>
    <property type="match status" value="1"/>
</dbReference>
<dbReference type="Pfam" id="PF02180">
    <property type="entry name" value="BH4"/>
    <property type="match status" value="1"/>
</dbReference>
<dbReference type="PRINTS" id="PR01865">
    <property type="entry name" value="APOPREGBCLW"/>
</dbReference>
<dbReference type="PRINTS" id="PR01862">
    <property type="entry name" value="BCL2FAMILY"/>
</dbReference>
<dbReference type="SMART" id="SM00337">
    <property type="entry name" value="BCL"/>
    <property type="match status" value="1"/>
</dbReference>
<dbReference type="SMART" id="SM00265">
    <property type="entry name" value="BH4"/>
    <property type="match status" value="1"/>
</dbReference>
<dbReference type="SUPFAM" id="SSF56854">
    <property type="entry name" value="Bcl-2 inhibitors of programmed cell death"/>
    <property type="match status" value="1"/>
</dbReference>
<dbReference type="PROSITE" id="PS50062">
    <property type="entry name" value="BCL2_FAMILY"/>
    <property type="match status" value="1"/>
</dbReference>
<dbReference type="PROSITE" id="PS01080">
    <property type="entry name" value="BH1"/>
    <property type="match status" value="1"/>
</dbReference>
<dbReference type="PROSITE" id="PS01258">
    <property type="entry name" value="BH2"/>
    <property type="match status" value="1"/>
</dbReference>
<dbReference type="PROSITE" id="PS01260">
    <property type="entry name" value="BH4_1"/>
    <property type="match status" value="1"/>
</dbReference>
<dbReference type="PROSITE" id="PS50063">
    <property type="entry name" value="BH4_2"/>
    <property type="match status" value="1"/>
</dbReference>